<comment type="function">
    <text evidence="3">Iron-storage protein, whose ferroxidase center binds Fe(2+), oxidizes it using dioxygen to Fe(3+), and participates in the subsequent Fe(3+) oxide mineral core formation within the central cavity of the BFR protein shell.</text>
</comment>
<comment type="catalytic activity">
    <reaction evidence="3">
        <text>4 Fe(2+) + O2 + 4 H(+) = 4 Fe(3+) + 2 H2O</text>
        <dbReference type="Rhea" id="RHEA:11148"/>
        <dbReference type="ChEBI" id="CHEBI:15377"/>
        <dbReference type="ChEBI" id="CHEBI:15378"/>
        <dbReference type="ChEBI" id="CHEBI:15379"/>
        <dbReference type="ChEBI" id="CHEBI:29033"/>
        <dbReference type="ChEBI" id="CHEBI:29034"/>
        <dbReference type="EC" id="1.16.3.1"/>
    </reaction>
</comment>
<comment type="catalytic activity">
    <reaction evidence="3">
        <text>Fe(2+)(in) = Fe(2+)(out)</text>
        <dbReference type="Rhea" id="RHEA:28486"/>
        <dbReference type="ChEBI" id="CHEBI:29033"/>
    </reaction>
</comment>
<comment type="subunit">
    <text evidence="1 3">Heterooligomer of 24 subunits, arranged as 12 dimers, that are packed together to form an approximately spherical molecule with a central cavity, in which large amounts of iron can be deposited.</text>
</comment>
<comment type="similarity">
    <text evidence="5">Belongs to the bacterioferritin family.</text>
</comment>
<comment type="caution">
    <text evidence="5">This protein does not have the conserved Met residue required for heme-binding, instead it has Thr-52. The heme-binding subunit is probably BfrB (Probable).</text>
</comment>
<dbReference type="EC" id="1.16.3.1" evidence="3"/>
<dbReference type="EMBL" id="AL157959">
    <property type="protein sequence ID" value="CAM08550.1"/>
    <property type="molecule type" value="Genomic_DNA"/>
</dbReference>
<dbReference type="PIR" id="C81907">
    <property type="entry name" value="C81907"/>
</dbReference>
<dbReference type="SMR" id="P56998"/>
<dbReference type="EnsemblBacteria" id="CAM08550">
    <property type="protein sequence ID" value="CAM08550"/>
    <property type="gene ID" value="NMA1377"/>
</dbReference>
<dbReference type="KEGG" id="nma:NMA1377"/>
<dbReference type="HOGENOM" id="CLU_104506_2_0_4"/>
<dbReference type="Proteomes" id="UP000000626">
    <property type="component" value="Chromosome"/>
</dbReference>
<dbReference type="GO" id="GO:0005829">
    <property type="term" value="C:cytosol"/>
    <property type="evidence" value="ECO:0007669"/>
    <property type="project" value="TreeGrafter"/>
</dbReference>
<dbReference type="GO" id="GO:0008199">
    <property type="term" value="F:ferric iron binding"/>
    <property type="evidence" value="ECO:0007669"/>
    <property type="project" value="InterPro"/>
</dbReference>
<dbReference type="GO" id="GO:0004322">
    <property type="term" value="F:ferroxidase activity"/>
    <property type="evidence" value="ECO:0007669"/>
    <property type="project" value="UniProtKB-EC"/>
</dbReference>
<dbReference type="GO" id="GO:0020037">
    <property type="term" value="F:heme binding"/>
    <property type="evidence" value="ECO:0007669"/>
    <property type="project" value="TreeGrafter"/>
</dbReference>
<dbReference type="GO" id="GO:0006879">
    <property type="term" value="P:intracellular iron ion homeostasis"/>
    <property type="evidence" value="ECO:0007669"/>
    <property type="project" value="UniProtKB-KW"/>
</dbReference>
<dbReference type="GO" id="GO:0006826">
    <property type="term" value="P:iron ion transport"/>
    <property type="evidence" value="ECO:0007669"/>
    <property type="project" value="UniProtKB-KW"/>
</dbReference>
<dbReference type="CDD" id="cd00907">
    <property type="entry name" value="Bacterioferritin"/>
    <property type="match status" value="1"/>
</dbReference>
<dbReference type="FunFam" id="1.20.1260.10:FF:000005">
    <property type="entry name" value="Bacterioferritin"/>
    <property type="match status" value="1"/>
</dbReference>
<dbReference type="Gene3D" id="1.20.1260.10">
    <property type="match status" value="1"/>
</dbReference>
<dbReference type="InterPro" id="IPR002024">
    <property type="entry name" value="Bacterioferritin"/>
</dbReference>
<dbReference type="InterPro" id="IPR012347">
    <property type="entry name" value="Ferritin-like"/>
</dbReference>
<dbReference type="InterPro" id="IPR009040">
    <property type="entry name" value="Ferritin-like_diiron"/>
</dbReference>
<dbReference type="InterPro" id="IPR009078">
    <property type="entry name" value="Ferritin-like_SF"/>
</dbReference>
<dbReference type="InterPro" id="IPR008331">
    <property type="entry name" value="Ferritin_DPS_dom"/>
</dbReference>
<dbReference type="NCBIfam" id="TIGR00754">
    <property type="entry name" value="bfr"/>
    <property type="match status" value="1"/>
</dbReference>
<dbReference type="PANTHER" id="PTHR30295">
    <property type="entry name" value="BACTERIOFERRITIN"/>
    <property type="match status" value="1"/>
</dbReference>
<dbReference type="PANTHER" id="PTHR30295:SF9">
    <property type="entry name" value="BACTERIOFERRITIN"/>
    <property type="match status" value="1"/>
</dbReference>
<dbReference type="Pfam" id="PF00210">
    <property type="entry name" value="Ferritin"/>
    <property type="match status" value="1"/>
</dbReference>
<dbReference type="PIRSF" id="PIRSF002560">
    <property type="entry name" value="Bacterioferritin"/>
    <property type="match status" value="1"/>
</dbReference>
<dbReference type="PRINTS" id="PR00601">
    <property type="entry name" value="BACFERRITIN"/>
</dbReference>
<dbReference type="SUPFAM" id="SSF47240">
    <property type="entry name" value="Ferritin-like"/>
    <property type="match status" value="1"/>
</dbReference>
<dbReference type="PROSITE" id="PS00549">
    <property type="entry name" value="BACTERIOFERRITIN"/>
    <property type="match status" value="1"/>
</dbReference>
<dbReference type="PROSITE" id="PS50905">
    <property type="entry name" value="FERRITIN_LIKE"/>
    <property type="match status" value="1"/>
</dbReference>
<proteinExistence type="inferred from homology"/>
<gene>
    <name type="primary">bfrA</name>
    <name type="ordered locus">NMA1377</name>
</gene>
<reference key="1">
    <citation type="journal article" date="2000" name="Nature">
        <title>Complete DNA sequence of a serogroup A strain of Neisseria meningitidis Z2491.</title>
        <authorList>
            <person name="Parkhill J."/>
            <person name="Achtman M."/>
            <person name="James K.D."/>
            <person name="Bentley S.D."/>
            <person name="Churcher C.M."/>
            <person name="Klee S.R."/>
            <person name="Morelli G."/>
            <person name="Basham D."/>
            <person name="Brown D."/>
            <person name="Chillingworth T."/>
            <person name="Davies R.M."/>
            <person name="Davis P."/>
            <person name="Devlin K."/>
            <person name="Feltwell T."/>
            <person name="Hamlin N."/>
            <person name="Holroyd S."/>
            <person name="Jagels K."/>
            <person name="Leather S."/>
            <person name="Moule S."/>
            <person name="Mungall K.L."/>
            <person name="Quail M.A."/>
            <person name="Rajandream M.A."/>
            <person name="Rutherford K.M."/>
            <person name="Simmonds M."/>
            <person name="Skelton J."/>
            <person name="Whitehead S."/>
            <person name="Spratt B.G."/>
            <person name="Barrell B.G."/>
        </authorList>
    </citation>
    <scope>NUCLEOTIDE SEQUENCE [LARGE SCALE GENOMIC DNA]</scope>
    <source>
        <strain>DSM 15465 / Z2491</strain>
    </source>
</reference>
<feature type="chain" id="PRO_0000192603" description="Bacterial ferritin">
    <location>
        <begin position="1"/>
        <end position="154"/>
    </location>
</feature>
<feature type="domain" description="Ferritin-like diiron" evidence="4">
    <location>
        <begin position="1"/>
        <end position="145"/>
    </location>
</feature>
<feature type="binding site" evidence="4">
    <location>
        <position position="18"/>
    </location>
    <ligand>
        <name>Fe cation</name>
        <dbReference type="ChEBI" id="CHEBI:24875"/>
        <label>1</label>
    </ligand>
</feature>
<feature type="binding site" evidence="4">
    <location>
        <position position="51"/>
    </location>
    <ligand>
        <name>Fe cation</name>
        <dbReference type="ChEBI" id="CHEBI:24875"/>
        <label>1</label>
    </ligand>
</feature>
<feature type="binding site" evidence="4">
    <location>
        <position position="51"/>
    </location>
    <ligand>
        <name>Fe cation</name>
        <dbReference type="ChEBI" id="CHEBI:24875"/>
        <label>2</label>
    </ligand>
</feature>
<feature type="binding site" evidence="4">
    <location>
        <position position="54"/>
    </location>
    <ligand>
        <name>Fe cation</name>
        <dbReference type="ChEBI" id="CHEBI:24875"/>
        <label>1</label>
    </ligand>
</feature>
<feature type="binding site" evidence="4">
    <location>
        <position position="93"/>
    </location>
    <ligand>
        <name>Fe cation</name>
        <dbReference type="ChEBI" id="CHEBI:24875"/>
        <label>2</label>
    </ligand>
</feature>
<feature type="binding site" evidence="4">
    <location>
        <position position="127"/>
    </location>
    <ligand>
        <name>Fe cation</name>
        <dbReference type="ChEBI" id="CHEBI:24875"/>
        <label>1</label>
    </ligand>
</feature>
<feature type="binding site" evidence="4">
    <location>
        <position position="127"/>
    </location>
    <ligand>
        <name>Fe cation</name>
        <dbReference type="ChEBI" id="CHEBI:24875"/>
        <label>2</label>
    </ligand>
</feature>
<feature type="binding site" evidence="4">
    <location>
        <position position="130"/>
    </location>
    <ligand>
        <name>Fe cation</name>
        <dbReference type="ChEBI" id="CHEBI:24875"/>
        <label>2</label>
    </ligand>
</feature>
<keyword id="KW-0406">Ion transport</keyword>
<keyword id="KW-0408">Iron</keyword>
<keyword id="KW-0409">Iron storage</keyword>
<keyword id="KW-0410">Iron transport</keyword>
<keyword id="KW-0479">Metal-binding</keyword>
<keyword id="KW-0560">Oxidoreductase</keyword>
<keyword id="KW-0813">Transport</keyword>
<accession>P56998</accession>
<accession>A1IS02</accession>
<evidence type="ECO:0000250" key="1"/>
<evidence type="ECO:0000250" key="2">
    <source>
        <dbReference type="UniProtKB" id="P0A998"/>
    </source>
</evidence>
<evidence type="ECO:0000250" key="3">
    <source>
        <dbReference type="UniProtKB" id="Q9HWF9"/>
    </source>
</evidence>
<evidence type="ECO:0000255" key="4">
    <source>
        <dbReference type="PROSITE-ProRule" id="PRU00085"/>
    </source>
</evidence>
<evidence type="ECO:0000305" key="5"/>
<sequence length="154" mass="17947">MQGNQAVVDYMNELLSGELAARDQYFIHSRLYSEWGYTKLFERLNHEMEEETTHAEDFIRRILMLGGTPKMARAELNIGTDVVSCLKADLQTEYEVRDALKKGIKLCEEAQDYVSRDLMVAQLKDTEEDHAHWLEQQLRLIELIGEGNYYQSQL</sequence>
<protein>
    <recommendedName>
        <fullName evidence="3">Bacterial ferritin</fullName>
        <ecNumber evidence="3">1.16.3.1</ecNumber>
    </recommendedName>
    <alternativeName>
        <fullName evidence="2">Bacterial non-heme ferritin</fullName>
    </alternativeName>
    <alternativeName>
        <fullName>Bacterioferritin A</fullName>
        <shortName>BFR A</shortName>
    </alternativeName>
</protein>
<organism>
    <name type="scientific">Neisseria meningitidis serogroup A / serotype 4A (strain DSM 15465 / Z2491)</name>
    <dbReference type="NCBI Taxonomy" id="122587"/>
    <lineage>
        <taxon>Bacteria</taxon>
        <taxon>Pseudomonadati</taxon>
        <taxon>Pseudomonadota</taxon>
        <taxon>Betaproteobacteria</taxon>
        <taxon>Neisseriales</taxon>
        <taxon>Neisseriaceae</taxon>
        <taxon>Neisseria</taxon>
    </lineage>
</organism>
<name>FTNA_NEIMA</name>